<organism>
    <name type="scientific">Arachis hypogaea</name>
    <name type="common">Peanut</name>
    <dbReference type="NCBI Taxonomy" id="3818"/>
    <lineage>
        <taxon>Eukaryota</taxon>
        <taxon>Viridiplantae</taxon>
        <taxon>Streptophyta</taxon>
        <taxon>Embryophyta</taxon>
        <taxon>Tracheophyta</taxon>
        <taxon>Spermatophyta</taxon>
        <taxon>Magnoliopsida</taxon>
        <taxon>eudicotyledons</taxon>
        <taxon>Gunneridae</taxon>
        <taxon>Pentapetalae</taxon>
        <taxon>rosids</taxon>
        <taxon>fabids</taxon>
        <taxon>Fabales</taxon>
        <taxon>Fabaceae</taxon>
        <taxon>Papilionoideae</taxon>
        <taxon>50 kb inversion clade</taxon>
        <taxon>dalbergioids sensu lato</taxon>
        <taxon>Dalbergieae</taxon>
        <taxon>Pterocarpus clade</taxon>
        <taxon>Arachis</taxon>
    </lineage>
</organism>
<name>CHI3_ARAHY</name>
<proteinExistence type="evidence at transcript level"/>
<keyword id="KW-0119">Carbohydrate metabolism</keyword>
<keyword id="KW-0146">Chitin degradation</keyword>
<keyword id="KW-0147">Chitin-binding</keyword>
<keyword id="KW-0326">Glycosidase</keyword>
<keyword id="KW-0378">Hydrolase</keyword>
<keyword id="KW-0611">Plant defense</keyword>
<keyword id="KW-0624">Polysaccharide degradation</keyword>
<protein>
    <recommendedName>
        <fullName>Endochitinase 3</fullName>
        <shortName>CHIT 3</shortName>
        <ecNumber>3.2.1.14</ecNumber>
    </recommendedName>
</protein>
<dbReference type="EC" id="3.2.1.14"/>
<dbReference type="EMBL" id="X56892">
    <property type="protein sequence ID" value="CAA40211.1"/>
    <property type="molecule type" value="mRNA"/>
</dbReference>
<dbReference type="SMR" id="Q06015"/>
<dbReference type="CAZy" id="GH19">
    <property type="family name" value="Glycoside Hydrolase Family 19"/>
</dbReference>
<dbReference type="GO" id="GO:0008061">
    <property type="term" value="F:chitin binding"/>
    <property type="evidence" value="ECO:0007669"/>
    <property type="project" value="UniProtKB-KW"/>
</dbReference>
<dbReference type="GO" id="GO:0008843">
    <property type="term" value="F:endochitinase activity"/>
    <property type="evidence" value="ECO:0007669"/>
    <property type="project" value="UniProtKB-EC"/>
</dbReference>
<dbReference type="GO" id="GO:0016998">
    <property type="term" value="P:cell wall macromolecule catabolic process"/>
    <property type="evidence" value="ECO:0007669"/>
    <property type="project" value="InterPro"/>
</dbReference>
<dbReference type="GO" id="GO:0006032">
    <property type="term" value="P:chitin catabolic process"/>
    <property type="evidence" value="ECO:0007669"/>
    <property type="project" value="UniProtKB-KW"/>
</dbReference>
<dbReference type="GO" id="GO:0006952">
    <property type="term" value="P:defense response"/>
    <property type="evidence" value="ECO:0007669"/>
    <property type="project" value="UniProtKB-KW"/>
</dbReference>
<dbReference type="GO" id="GO:0000272">
    <property type="term" value="P:polysaccharide catabolic process"/>
    <property type="evidence" value="ECO:0007669"/>
    <property type="project" value="UniProtKB-KW"/>
</dbReference>
<dbReference type="Gene3D" id="1.10.530.10">
    <property type="match status" value="1"/>
</dbReference>
<dbReference type="InterPro" id="IPR000726">
    <property type="entry name" value="Glyco_hydro_19_cat"/>
</dbReference>
<dbReference type="InterPro" id="IPR023346">
    <property type="entry name" value="Lysozyme-like_dom_sf"/>
</dbReference>
<dbReference type="Pfam" id="PF00182">
    <property type="entry name" value="Glyco_hydro_19"/>
    <property type="match status" value="1"/>
</dbReference>
<dbReference type="SUPFAM" id="SSF53955">
    <property type="entry name" value="Lysozyme-like"/>
    <property type="match status" value="1"/>
</dbReference>
<comment type="function">
    <text>Defense against chitin-containing fungal and bacterial pathogens.</text>
</comment>
<comment type="catalytic activity">
    <reaction>
        <text>Random endo-hydrolysis of N-acetyl-beta-D-glucosaminide (1-&gt;4)-beta-linkages in chitin and chitodextrins.</text>
        <dbReference type="EC" id="3.2.1.14"/>
    </reaction>
</comment>
<comment type="induction">
    <text>Constitutively expressed at low levels.</text>
</comment>
<comment type="similarity">
    <text evidence="2">Belongs to the glycosyl hydrolase 19 family. Chitinase class I subfamily.</text>
</comment>
<accession>Q06015</accession>
<sequence length="46" mass="4770">MTPQGNKPSSHDVITGRWTPSDADRAAGRVSGFGVITNIINGGLDC</sequence>
<reference key="1">
    <citation type="journal article" date="1990" name="Mol. Gen. Genet.">
        <title>Elicitor-specific induction of one member of the chitinase gene family in Arachis hypogaea.</title>
        <authorList>
            <person name="Herget T."/>
            <person name="Schell J."/>
            <person name="Schreier P.H."/>
        </authorList>
    </citation>
    <scope>NUCLEOTIDE SEQUENCE [MRNA]</scope>
</reference>
<evidence type="ECO:0000256" key="1">
    <source>
        <dbReference type="SAM" id="MobiDB-lite"/>
    </source>
</evidence>
<evidence type="ECO:0000305" key="2"/>
<feature type="chain" id="PRO_0000124822" description="Endochitinase 3">
    <location>
        <begin position="1" status="less than"/>
        <end position="46" status="greater than"/>
    </location>
</feature>
<feature type="region of interest" description="Disordered" evidence="1">
    <location>
        <begin position="1"/>
        <end position="21"/>
    </location>
</feature>
<feature type="non-terminal residue">
    <location>
        <position position="1"/>
    </location>
</feature>
<feature type="non-terminal residue">
    <location>
        <position position="46"/>
    </location>
</feature>